<dbReference type="GO" id="GO:0005576">
    <property type="term" value="C:extracellular region"/>
    <property type="evidence" value="ECO:0007669"/>
    <property type="project" value="UniProtKB-SubCell"/>
</dbReference>
<dbReference type="GO" id="GO:0016020">
    <property type="term" value="C:membrane"/>
    <property type="evidence" value="ECO:0007669"/>
    <property type="project" value="UniProtKB-KW"/>
</dbReference>
<dbReference type="GO" id="GO:0044218">
    <property type="term" value="C:other organism cell membrane"/>
    <property type="evidence" value="ECO:0007669"/>
    <property type="project" value="UniProtKB-KW"/>
</dbReference>
<dbReference type="GO" id="GO:0042742">
    <property type="term" value="P:defense response to bacterium"/>
    <property type="evidence" value="ECO:0007669"/>
    <property type="project" value="UniProtKB-KW"/>
</dbReference>
<dbReference type="GO" id="GO:0050832">
    <property type="term" value="P:defense response to fungus"/>
    <property type="evidence" value="ECO:0007669"/>
    <property type="project" value="UniProtKB-KW"/>
</dbReference>
<dbReference type="GO" id="GO:0045087">
    <property type="term" value="P:innate immune response"/>
    <property type="evidence" value="ECO:0007669"/>
    <property type="project" value="UniProtKB-KW"/>
</dbReference>
<dbReference type="GO" id="GO:0031640">
    <property type="term" value="P:killing of cells of another organism"/>
    <property type="evidence" value="ECO:0007669"/>
    <property type="project" value="UniProtKB-KW"/>
</dbReference>
<accession>P0DQX7</accession>
<comment type="function">
    <text evidence="1 2">Antimicrobial and mast cell degranulating peptide which probably acts by forming pores in membranes (By similarity). Active against both Gram-negative and Gram-positive bacterial strains as well as against yeasts (By similarity). Has little hemolytic activity (By similarity). In the context of inflammation and cancer tests, is weakly cytotoxic to normal cells, induces calcium signaling but does not impact cAMP production (PubMed:36548715). In addition, prevents LPS-induced nitric oxid (NO) synthesis but does not affect the IP3 signaling and pro-inflammatory activation of endothelial cells (PubMed:36548715). Does not show significant antiproliferative activity on the breast cancer cell line MDA-MB-231 (PubMed:36548715).</text>
</comment>
<comment type="subcellular location">
    <subcellularLocation>
        <location evidence="5">Secreted</location>
    </subcellularLocation>
    <subcellularLocation>
        <location evidence="4">Target cell membrane</location>
    </subcellularLocation>
    <text evidence="4">Assumes an amphipathic alpha-helical conformation in a lipid environment.</text>
</comment>
<comment type="tissue specificity">
    <text evidence="5">Expressed by the venom gland.</text>
</comment>
<comment type="similarity">
    <text evidence="4">Belongs to the xylopin-like family.</text>
</comment>
<organism>
    <name type="scientific">Xylocopa violacea</name>
    <name type="common">Violet carpenter bee</name>
    <name type="synonym">Apis violacea</name>
    <dbReference type="NCBI Taxonomy" id="135666"/>
    <lineage>
        <taxon>Eukaryota</taxon>
        <taxon>Metazoa</taxon>
        <taxon>Ecdysozoa</taxon>
        <taxon>Arthropoda</taxon>
        <taxon>Hexapoda</taxon>
        <taxon>Insecta</taxon>
        <taxon>Pterygota</taxon>
        <taxon>Neoptera</taxon>
        <taxon>Endopterygota</taxon>
        <taxon>Hymenoptera</taxon>
        <taxon>Apocrita</taxon>
        <taxon>Aculeata</taxon>
        <taxon>Apoidea</taxon>
        <taxon>Anthophila</taxon>
        <taxon>Apidae</taxon>
        <taxon>Xylocopa</taxon>
        <taxon>Xylocopa</taxon>
    </lineage>
</organism>
<feature type="peptide" id="PRO_0000457818" description="Antimicrobial peptide Xac-3" evidence="5">
    <location>
        <begin position="1"/>
        <end position="19"/>
    </location>
</feature>
<name>XAC3_XYLVO</name>
<sequence>GVLSLLKKLPMILKHLHGK</sequence>
<protein>
    <recommendedName>
        <fullName evidence="5">Antimicrobial peptide Xac-3</fullName>
        <shortName evidence="3">Xac3</shortName>
    </recommendedName>
</protein>
<keyword id="KW-0044">Antibiotic</keyword>
<keyword id="KW-0929">Antimicrobial</keyword>
<keyword id="KW-0295">Fungicide</keyword>
<keyword id="KW-0391">Immunity</keyword>
<keyword id="KW-0399">Innate immunity</keyword>
<keyword id="KW-0472">Membrane</keyword>
<keyword id="KW-0964">Secreted</keyword>
<keyword id="KW-1052">Target cell membrane</keyword>
<keyword id="KW-1053">Target membrane</keyword>
<proteinExistence type="inferred from homology"/>
<evidence type="ECO:0000250" key="1">
    <source>
        <dbReference type="UniProtKB" id="C0HKQ5"/>
    </source>
</evidence>
<evidence type="ECO:0000269" key="2">
    <source>
    </source>
</evidence>
<evidence type="ECO:0000303" key="3">
    <source>
    </source>
</evidence>
<evidence type="ECO:0000305" key="4"/>
<evidence type="ECO:0000305" key="5">
    <source>
    </source>
</evidence>
<reference key="1">
    <citation type="journal article" date="2022" name="Toxins">
        <title>The pharmacological potential of novel melittin variants from the honeybee and solitary bees against inflammation and cancer.</title>
        <authorList>
            <person name="Erkoc P."/>
            <person name="von Reumont B.M."/>
            <person name="Lueddecke T."/>
            <person name="Henke M."/>
            <person name="Ulshoefer T."/>
            <person name="Vilcinskas A."/>
            <person name="Fuerst R."/>
            <person name="Schiffmann S."/>
        </authorList>
    </citation>
    <scope>NUCLEOTIDE SEQUENCE [MRNA]</scope>
    <scope>FUNCTION</scope>
    <source>
        <tissue>Venom gland</tissue>
    </source>
</reference>